<feature type="chain" id="PRO_0000274015" description="Peptidase T">
    <location>
        <begin position="1"/>
        <end position="408"/>
    </location>
</feature>
<feature type="active site" evidence="1">
    <location>
        <position position="80"/>
    </location>
</feature>
<feature type="active site" description="Proton acceptor" evidence="1">
    <location>
        <position position="173"/>
    </location>
</feature>
<feature type="binding site" evidence="1">
    <location>
        <position position="78"/>
    </location>
    <ligand>
        <name>Zn(2+)</name>
        <dbReference type="ChEBI" id="CHEBI:29105"/>
        <label>1</label>
    </ligand>
</feature>
<feature type="binding site" evidence="1">
    <location>
        <position position="140"/>
    </location>
    <ligand>
        <name>Zn(2+)</name>
        <dbReference type="ChEBI" id="CHEBI:29105"/>
        <label>1</label>
    </ligand>
</feature>
<feature type="binding site" evidence="1">
    <location>
        <position position="140"/>
    </location>
    <ligand>
        <name>Zn(2+)</name>
        <dbReference type="ChEBI" id="CHEBI:29105"/>
        <label>2</label>
    </ligand>
</feature>
<feature type="binding site" evidence="1">
    <location>
        <position position="174"/>
    </location>
    <ligand>
        <name>Zn(2+)</name>
        <dbReference type="ChEBI" id="CHEBI:29105"/>
        <label>2</label>
    </ligand>
</feature>
<feature type="binding site" evidence="1">
    <location>
        <position position="196"/>
    </location>
    <ligand>
        <name>Zn(2+)</name>
        <dbReference type="ChEBI" id="CHEBI:29105"/>
        <label>1</label>
    </ligand>
</feature>
<feature type="binding site" evidence="1">
    <location>
        <position position="379"/>
    </location>
    <ligand>
        <name>Zn(2+)</name>
        <dbReference type="ChEBI" id="CHEBI:29105"/>
        <label>2</label>
    </ligand>
</feature>
<reference key="1">
    <citation type="journal article" date="2006" name="Mol. Microbiol.">
        <title>Role of pathogenicity island-associated integrases in the genome plasticity of uropathogenic Escherichia coli strain 536.</title>
        <authorList>
            <person name="Hochhut B."/>
            <person name="Wilde C."/>
            <person name="Balling G."/>
            <person name="Middendorf B."/>
            <person name="Dobrindt U."/>
            <person name="Brzuszkiewicz E."/>
            <person name="Gottschalk G."/>
            <person name="Carniel E."/>
            <person name="Hacker J."/>
        </authorList>
    </citation>
    <scope>NUCLEOTIDE SEQUENCE [LARGE SCALE GENOMIC DNA]</scope>
    <source>
        <strain>536 / UPEC</strain>
    </source>
</reference>
<proteinExistence type="inferred from homology"/>
<gene>
    <name evidence="1" type="primary">pepT</name>
    <name type="ordered locus">ECP_1122</name>
</gene>
<keyword id="KW-0031">Aminopeptidase</keyword>
<keyword id="KW-0963">Cytoplasm</keyword>
<keyword id="KW-0378">Hydrolase</keyword>
<keyword id="KW-0479">Metal-binding</keyword>
<keyword id="KW-0482">Metalloprotease</keyword>
<keyword id="KW-0645">Protease</keyword>
<keyword id="KW-0862">Zinc</keyword>
<organism>
    <name type="scientific">Escherichia coli O6:K15:H31 (strain 536 / UPEC)</name>
    <dbReference type="NCBI Taxonomy" id="362663"/>
    <lineage>
        <taxon>Bacteria</taxon>
        <taxon>Pseudomonadati</taxon>
        <taxon>Pseudomonadota</taxon>
        <taxon>Gammaproteobacteria</taxon>
        <taxon>Enterobacterales</taxon>
        <taxon>Enterobacteriaceae</taxon>
        <taxon>Escherichia</taxon>
    </lineage>
</organism>
<protein>
    <recommendedName>
        <fullName evidence="1">Peptidase T</fullName>
        <ecNumber evidence="1">3.4.11.4</ecNumber>
    </recommendedName>
    <alternativeName>
        <fullName evidence="1">Aminotripeptidase</fullName>
        <shortName evidence="1">Tripeptidase</shortName>
    </alternativeName>
    <alternativeName>
        <fullName evidence="1">Tripeptide aminopeptidase</fullName>
    </alternativeName>
</protein>
<accession>Q0TIU6</accession>
<comment type="function">
    <text evidence="1">Cleaves the N-terminal amino acid of tripeptides.</text>
</comment>
<comment type="catalytic activity">
    <reaction evidence="1">
        <text>Release of the N-terminal residue from a tripeptide.</text>
        <dbReference type="EC" id="3.4.11.4"/>
    </reaction>
</comment>
<comment type="cofactor">
    <cofactor evidence="1">
        <name>Zn(2+)</name>
        <dbReference type="ChEBI" id="CHEBI:29105"/>
    </cofactor>
    <text evidence="1">Binds 2 Zn(2+) ions per subunit.</text>
</comment>
<comment type="subcellular location">
    <subcellularLocation>
        <location evidence="1">Cytoplasm</location>
    </subcellularLocation>
</comment>
<comment type="similarity">
    <text evidence="1">Belongs to the peptidase M20B family.</text>
</comment>
<sequence>MDKLLERFLNYVSLDTQSKAGVRQVPSTEGQWKLLHLLKEQLEEMGLINVTLSEKGTLMATLPANVPGDIPAIGFISHVDTSPDCSGKNVNPQIVENYRGGDIALGIGDEVLSPVMFPVLHQLLGQTLITTDGKTLLGADDQAGIAEIMTALAVLQQKNIPHGDIRVAFTPDEEVGKGAKHFDVDAFDARWAYTVDGGGVGELEFENFNAASVNIKIVGNNVHPGTAKGVMVNALSLAARIHAEVPADESPEMTEGYEGFYHLASMKGTVERADMHYIIRDFDRKQFEARKRKMMEIAKKVGKGLHPDCYIELVIEDSYYNMREKVVEHPHILDIAQQAMRDCDIEPELKPIRGGTDGAQLSFMGLPCPNLFTGGYNYHGKHEFVTLEGMEKAVQVIVRIAELTAQRK</sequence>
<name>PEPT_ECOL5</name>
<dbReference type="EC" id="3.4.11.4" evidence="1"/>
<dbReference type="EMBL" id="CP000247">
    <property type="protein sequence ID" value="ABG69133.1"/>
    <property type="molecule type" value="Genomic_DNA"/>
</dbReference>
<dbReference type="RefSeq" id="WP_000359455.1">
    <property type="nucleotide sequence ID" value="NC_008253.1"/>
</dbReference>
<dbReference type="SMR" id="Q0TIU6"/>
<dbReference type="MEROPS" id="M20.003"/>
<dbReference type="KEGG" id="ecp:ECP_1122"/>
<dbReference type="HOGENOM" id="CLU_053676_0_0_6"/>
<dbReference type="Proteomes" id="UP000009182">
    <property type="component" value="Chromosome"/>
</dbReference>
<dbReference type="GO" id="GO:0005829">
    <property type="term" value="C:cytosol"/>
    <property type="evidence" value="ECO:0007669"/>
    <property type="project" value="TreeGrafter"/>
</dbReference>
<dbReference type="GO" id="GO:0008237">
    <property type="term" value="F:metallopeptidase activity"/>
    <property type="evidence" value="ECO:0007669"/>
    <property type="project" value="UniProtKB-KW"/>
</dbReference>
<dbReference type="GO" id="GO:0045148">
    <property type="term" value="F:tripeptide aminopeptidase activity"/>
    <property type="evidence" value="ECO:0007669"/>
    <property type="project" value="UniProtKB-UniRule"/>
</dbReference>
<dbReference type="GO" id="GO:0008270">
    <property type="term" value="F:zinc ion binding"/>
    <property type="evidence" value="ECO:0007669"/>
    <property type="project" value="UniProtKB-UniRule"/>
</dbReference>
<dbReference type="GO" id="GO:0043171">
    <property type="term" value="P:peptide catabolic process"/>
    <property type="evidence" value="ECO:0007669"/>
    <property type="project" value="UniProtKB-UniRule"/>
</dbReference>
<dbReference type="GO" id="GO:0006508">
    <property type="term" value="P:proteolysis"/>
    <property type="evidence" value="ECO:0007669"/>
    <property type="project" value="UniProtKB-UniRule"/>
</dbReference>
<dbReference type="CDD" id="cd03892">
    <property type="entry name" value="M20_peptT"/>
    <property type="match status" value="1"/>
</dbReference>
<dbReference type="FunFam" id="3.30.70.360:FF:000002">
    <property type="entry name" value="Peptidase T"/>
    <property type="match status" value="1"/>
</dbReference>
<dbReference type="Gene3D" id="3.30.70.360">
    <property type="match status" value="1"/>
</dbReference>
<dbReference type="Gene3D" id="3.40.630.10">
    <property type="entry name" value="Zn peptidases"/>
    <property type="match status" value="1"/>
</dbReference>
<dbReference type="HAMAP" id="MF_00550">
    <property type="entry name" value="Aminopeptidase_M20"/>
    <property type="match status" value="1"/>
</dbReference>
<dbReference type="InterPro" id="IPR001261">
    <property type="entry name" value="ArgE/DapE_CS"/>
</dbReference>
<dbReference type="InterPro" id="IPR036264">
    <property type="entry name" value="Bact_exopeptidase_dim_dom"/>
</dbReference>
<dbReference type="InterPro" id="IPR002933">
    <property type="entry name" value="Peptidase_M20"/>
</dbReference>
<dbReference type="InterPro" id="IPR011650">
    <property type="entry name" value="Peptidase_M20_dimer"/>
</dbReference>
<dbReference type="InterPro" id="IPR010161">
    <property type="entry name" value="Peptidase_M20B"/>
</dbReference>
<dbReference type="NCBIfam" id="TIGR01882">
    <property type="entry name" value="peptidase-T"/>
    <property type="match status" value="1"/>
</dbReference>
<dbReference type="NCBIfam" id="NF003976">
    <property type="entry name" value="PRK05469.1"/>
    <property type="match status" value="1"/>
</dbReference>
<dbReference type="NCBIfam" id="NF009920">
    <property type="entry name" value="PRK13381.1"/>
    <property type="match status" value="1"/>
</dbReference>
<dbReference type="PANTHER" id="PTHR42994">
    <property type="entry name" value="PEPTIDASE T"/>
    <property type="match status" value="1"/>
</dbReference>
<dbReference type="PANTHER" id="PTHR42994:SF1">
    <property type="entry name" value="PEPTIDASE T"/>
    <property type="match status" value="1"/>
</dbReference>
<dbReference type="Pfam" id="PF07687">
    <property type="entry name" value="M20_dimer"/>
    <property type="match status" value="1"/>
</dbReference>
<dbReference type="Pfam" id="PF01546">
    <property type="entry name" value="Peptidase_M20"/>
    <property type="match status" value="1"/>
</dbReference>
<dbReference type="PIRSF" id="PIRSF037215">
    <property type="entry name" value="Peptidase_M20B"/>
    <property type="match status" value="1"/>
</dbReference>
<dbReference type="SUPFAM" id="SSF55031">
    <property type="entry name" value="Bacterial exopeptidase dimerisation domain"/>
    <property type="match status" value="1"/>
</dbReference>
<dbReference type="SUPFAM" id="SSF53187">
    <property type="entry name" value="Zn-dependent exopeptidases"/>
    <property type="match status" value="1"/>
</dbReference>
<dbReference type="PROSITE" id="PS00758">
    <property type="entry name" value="ARGE_DAPE_CPG2_1"/>
    <property type="match status" value="1"/>
</dbReference>
<evidence type="ECO:0000255" key="1">
    <source>
        <dbReference type="HAMAP-Rule" id="MF_00550"/>
    </source>
</evidence>